<comment type="function">
    <text evidence="1">Together with LptE, is involved in the assembly of lipopolysaccharide (LPS) at the surface of the outer membrane.</text>
</comment>
<comment type="subunit">
    <text evidence="1">Component of the lipopolysaccharide transport and assembly complex. Interacts with LptE and LptA.</text>
</comment>
<comment type="subcellular location">
    <subcellularLocation>
        <location evidence="1">Cell outer membrane</location>
    </subcellularLocation>
</comment>
<comment type="similarity">
    <text evidence="1">Belongs to the LptD family.</text>
</comment>
<proteinExistence type="inferred from homology"/>
<feature type="signal peptide" evidence="1">
    <location>
        <begin position="1"/>
        <end position="20"/>
    </location>
</feature>
<feature type="chain" id="PRO_0000281591" description="LPS-assembly protein LptD">
    <location>
        <begin position="21"/>
        <end position="790"/>
    </location>
</feature>
<evidence type="ECO:0000255" key="1">
    <source>
        <dbReference type="HAMAP-Rule" id="MF_01411"/>
    </source>
</evidence>
<protein>
    <recommendedName>
        <fullName evidence="1">LPS-assembly protein LptD</fullName>
    </recommendedName>
</protein>
<reference key="1">
    <citation type="journal article" date="2003" name="Nat. Genet.">
        <title>Comparative analysis of the genome sequences of Bordetella pertussis, Bordetella parapertussis and Bordetella bronchiseptica.</title>
        <authorList>
            <person name="Parkhill J."/>
            <person name="Sebaihia M."/>
            <person name="Preston A."/>
            <person name="Murphy L.D."/>
            <person name="Thomson N.R."/>
            <person name="Harris D.E."/>
            <person name="Holden M.T.G."/>
            <person name="Churcher C.M."/>
            <person name="Bentley S.D."/>
            <person name="Mungall K.L."/>
            <person name="Cerdeno-Tarraga A.-M."/>
            <person name="Temple L."/>
            <person name="James K.D."/>
            <person name="Harris B."/>
            <person name="Quail M.A."/>
            <person name="Achtman M."/>
            <person name="Atkin R."/>
            <person name="Baker S."/>
            <person name="Basham D."/>
            <person name="Bason N."/>
            <person name="Cherevach I."/>
            <person name="Chillingworth T."/>
            <person name="Collins M."/>
            <person name="Cronin A."/>
            <person name="Davis P."/>
            <person name="Doggett J."/>
            <person name="Feltwell T."/>
            <person name="Goble A."/>
            <person name="Hamlin N."/>
            <person name="Hauser H."/>
            <person name="Holroyd S."/>
            <person name="Jagels K."/>
            <person name="Leather S."/>
            <person name="Moule S."/>
            <person name="Norberczak H."/>
            <person name="O'Neil S."/>
            <person name="Ormond D."/>
            <person name="Price C."/>
            <person name="Rabbinowitsch E."/>
            <person name="Rutter S."/>
            <person name="Sanders M."/>
            <person name="Saunders D."/>
            <person name="Seeger K."/>
            <person name="Sharp S."/>
            <person name="Simmonds M."/>
            <person name="Skelton J."/>
            <person name="Squares R."/>
            <person name="Squares S."/>
            <person name="Stevens K."/>
            <person name="Unwin L."/>
            <person name="Whitehead S."/>
            <person name="Barrell B.G."/>
            <person name="Maskell D.J."/>
        </authorList>
    </citation>
    <scope>NUCLEOTIDE SEQUENCE [LARGE SCALE GENOMIC DNA]</scope>
    <source>
        <strain>Tohama I / ATCC BAA-589 / NCTC 13251</strain>
    </source>
</reference>
<organism>
    <name type="scientific">Bordetella pertussis (strain Tohama I / ATCC BAA-589 / NCTC 13251)</name>
    <dbReference type="NCBI Taxonomy" id="257313"/>
    <lineage>
        <taxon>Bacteria</taxon>
        <taxon>Pseudomonadati</taxon>
        <taxon>Pseudomonadota</taxon>
        <taxon>Betaproteobacteria</taxon>
        <taxon>Burkholderiales</taxon>
        <taxon>Alcaligenaceae</taxon>
        <taxon>Bordetella</taxon>
    </lineage>
</organism>
<name>LPTD_BORPE</name>
<accession>Q7VU13</accession>
<dbReference type="EMBL" id="BX640421">
    <property type="protein sequence ID" value="CAE43594.1"/>
    <property type="molecule type" value="Genomic_DNA"/>
</dbReference>
<dbReference type="RefSeq" id="NP_881865.1">
    <property type="nucleotide sequence ID" value="NC_002929.2"/>
</dbReference>
<dbReference type="RefSeq" id="WP_010931411.1">
    <property type="nucleotide sequence ID" value="NZ_CP039022.1"/>
</dbReference>
<dbReference type="SMR" id="Q7VU13"/>
<dbReference type="STRING" id="257313.BP3329"/>
<dbReference type="PaxDb" id="257313-BP3329"/>
<dbReference type="KEGG" id="bpe:BP3329"/>
<dbReference type="PATRIC" id="fig|257313.5.peg.3608"/>
<dbReference type="eggNOG" id="COG1452">
    <property type="taxonomic scope" value="Bacteria"/>
</dbReference>
<dbReference type="HOGENOM" id="CLU_009039_0_0_4"/>
<dbReference type="Proteomes" id="UP000002676">
    <property type="component" value="Chromosome"/>
</dbReference>
<dbReference type="GO" id="GO:0009279">
    <property type="term" value="C:cell outer membrane"/>
    <property type="evidence" value="ECO:0007669"/>
    <property type="project" value="UniProtKB-SubCell"/>
</dbReference>
<dbReference type="GO" id="GO:1990351">
    <property type="term" value="C:transporter complex"/>
    <property type="evidence" value="ECO:0007669"/>
    <property type="project" value="TreeGrafter"/>
</dbReference>
<dbReference type="GO" id="GO:0043165">
    <property type="term" value="P:Gram-negative-bacterium-type cell outer membrane assembly"/>
    <property type="evidence" value="ECO:0007669"/>
    <property type="project" value="UniProtKB-UniRule"/>
</dbReference>
<dbReference type="GO" id="GO:0015920">
    <property type="term" value="P:lipopolysaccharide transport"/>
    <property type="evidence" value="ECO:0007669"/>
    <property type="project" value="InterPro"/>
</dbReference>
<dbReference type="Gene3D" id="2.60.450.10">
    <property type="entry name" value="Lipopolysaccharide (LPS) transport protein A like domain"/>
    <property type="match status" value="1"/>
</dbReference>
<dbReference type="HAMAP" id="MF_01411">
    <property type="entry name" value="LPS_assembly_LptD"/>
    <property type="match status" value="1"/>
</dbReference>
<dbReference type="InterPro" id="IPR020889">
    <property type="entry name" value="LipoPS_assembly_LptD"/>
</dbReference>
<dbReference type="InterPro" id="IPR050218">
    <property type="entry name" value="LptD"/>
</dbReference>
<dbReference type="InterPro" id="IPR045659">
    <property type="entry name" value="LptD_2"/>
</dbReference>
<dbReference type="InterPro" id="IPR007543">
    <property type="entry name" value="LptD_C"/>
</dbReference>
<dbReference type="PANTHER" id="PTHR30189">
    <property type="entry name" value="LPS-ASSEMBLY PROTEIN"/>
    <property type="match status" value="1"/>
</dbReference>
<dbReference type="PANTHER" id="PTHR30189:SF1">
    <property type="entry name" value="LPS-ASSEMBLY PROTEIN LPTD"/>
    <property type="match status" value="1"/>
</dbReference>
<dbReference type="Pfam" id="PF04453">
    <property type="entry name" value="LptD"/>
    <property type="match status" value="1"/>
</dbReference>
<dbReference type="Pfam" id="PF19838">
    <property type="entry name" value="LptD_2"/>
    <property type="match status" value="1"/>
</dbReference>
<sequence length="790" mass="88588">MRMLRWLILSAFSVAGAVQAQGNQDSAAASAPSASIGAPVLRTSPGLRVHRLPDEKIPAFMEADQISGDPDSEVTLTGNAQVRRVDGIIKGDRINYRRDTGDVDVQGSARMLRDGTLITGPSARLNVDTYSGEIQEPNFWIGASGGTAQARHADIFSKSQMRLSQVTYSGCPCPKPSWYIKADTVDLDFDENEGVARNGVLYFKDVPILASPYLTFPVKKERKSGFLMPTYGTTSNSGFDISLPYYFNLAPNYDLTLVPRYLSKRGAQLGGEFRYLGSGYRGVAIGTYLPDDNETGRDRWMYRTYHRQLLGNGFYTDWDIAGASDDNYFRDISELGLNTASTTYLPRRGRVGWSSTYWQTYAQVYKYQTLQDPDAPLAPPYDKVPELWLKGARYDWGGFDAEWVSTAVRFQRSLLNGRRLGPDGDRLQTYPTVSYPIGRPGWFLVPKVGVHYTQYRTDWYNRDWNRIGLSNYKRTESRTVPIMSLDAGMIFERDASLFGKAATQTLEPRLYYLRVPYRDQSALPVYDTTLADFSFDQAFQENIYTGGWDRIANANQLTAALTTRWLDANTGFERLSLSAAQRIYFQDQEVTLPAEQPRKNVRSDFLVGATAALTDTLITDVAAQYNPYDNKWSRGMVSARWSPQRLTTVAVAYRYQRDPLPGISYQPQGQNQVSLAVQWPIHRRWYGVGRVDYSLRSEPATAAAAEQSPRVTQAIAGLEYKGDCCWVGRVVYQRYAVSAADTNTALFFQLELTGLGALGTDPISLLNRSIPGYQSVVPPTPTGTTFERYE</sequence>
<keyword id="KW-0998">Cell outer membrane</keyword>
<keyword id="KW-0472">Membrane</keyword>
<keyword id="KW-1185">Reference proteome</keyword>
<keyword id="KW-0732">Signal</keyword>
<gene>
    <name evidence="1" type="primary">lptD</name>
    <name type="synonym">imp</name>
    <name type="synonym">ostA</name>
    <name type="ordered locus">BP3329</name>
</gene>